<dbReference type="EMBL" id="AE005174">
    <property type="protein sequence ID" value="AAG56785.1"/>
    <property type="molecule type" value="Genomic_DNA"/>
</dbReference>
<dbReference type="EMBL" id="BA000007">
    <property type="protein sequence ID" value="BAB35928.1"/>
    <property type="molecule type" value="Genomic_DNA"/>
</dbReference>
<dbReference type="PIR" id="A90942">
    <property type="entry name" value="A90942"/>
</dbReference>
<dbReference type="PIR" id="E85790">
    <property type="entry name" value="E85790"/>
</dbReference>
<dbReference type="RefSeq" id="NP_310532.1">
    <property type="nucleotide sequence ID" value="NC_002695.1"/>
</dbReference>
<dbReference type="RefSeq" id="WP_000513737.1">
    <property type="nucleotide sequence ID" value="NZ_VOAI01000010.1"/>
</dbReference>
<dbReference type="BMRB" id="P64498"/>
<dbReference type="SMR" id="P64498"/>
<dbReference type="STRING" id="155864.Z2838"/>
<dbReference type="GeneID" id="916565"/>
<dbReference type="KEGG" id="ece:Z2838"/>
<dbReference type="KEGG" id="ecs:ECs_2505"/>
<dbReference type="PATRIC" id="fig|386585.9.peg.2624"/>
<dbReference type="eggNOG" id="ENOG5032979">
    <property type="taxonomic scope" value="Bacteria"/>
</dbReference>
<dbReference type="HOGENOM" id="CLU_211215_0_0_6"/>
<dbReference type="OMA" id="MAFYVPD"/>
<dbReference type="Proteomes" id="UP000000558">
    <property type="component" value="Chromosome"/>
</dbReference>
<dbReference type="Proteomes" id="UP000002519">
    <property type="component" value="Chromosome"/>
</dbReference>
<dbReference type="Gene3D" id="3.30.160.220">
    <property type="entry name" value="YoaG"/>
    <property type="match status" value="1"/>
</dbReference>
<dbReference type="InterPro" id="IPR015051">
    <property type="entry name" value="YoaG"/>
</dbReference>
<dbReference type="InterPro" id="IPR036489">
    <property type="entry name" value="YoaG_sf"/>
</dbReference>
<dbReference type="Pfam" id="PF08956">
    <property type="entry name" value="DUF1869"/>
    <property type="match status" value="1"/>
</dbReference>
<dbReference type="SUPFAM" id="SSF103063">
    <property type="entry name" value="Hypothetical protein YoaG"/>
    <property type="match status" value="1"/>
</dbReference>
<evidence type="ECO:0000250" key="1"/>
<proteinExistence type="inferred from homology"/>
<protein>
    <recommendedName>
        <fullName>Protein YoaG</fullName>
    </recommendedName>
</protein>
<feature type="chain" id="PRO_0000169038" description="Protein YoaG">
    <location>
        <begin position="1"/>
        <end position="60"/>
    </location>
</feature>
<keyword id="KW-1185">Reference proteome</keyword>
<gene>
    <name type="primary">yoaG</name>
    <name type="ordered locus">Z2838</name>
    <name type="ordered locus">ECs2505</name>
</gene>
<name>YOAG_ECO57</name>
<organism>
    <name type="scientific">Escherichia coli O157:H7</name>
    <dbReference type="NCBI Taxonomy" id="83334"/>
    <lineage>
        <taxon>Bacteria</taxon>
        <taxon>Pseudomonadati</taxon>
        <taxon>Pseudomonadota</taxon>
        <taxon>Gammaproteobacteria</taxon>
        <taxon>Enterobacterales</taxon>
        <taxon>Enterobacteriaceae</taxon>
        <taxon>Escherichia</taxon>
    </lineage>
</organism>
<reference key="1">
    <citation type="journal article" date="2001" name="Nature">
        <title>Genome sequence of enterohaemorrhagic Escherichia coli O157:H7.</title>
        <authorList>
            <person name="Perna N.T."/>
            <person name="Plunkett G. III"/>
            <person name="Burland V."/>
            <person name="Mau B."/>
            <person name="Glasner J.D."/>
            <person name="Rose D.J."/>
            <person name="Mayhew G.F."/>
            <person name="Evans P.S."/>
            <person name="Gregor J."/>
            <person name="Kirkpatrick H.A."/>
            <person name="Posfai G."/>
            <person name="Hackett J."/>
            <person name="Klink S."/>
            <person name="Boutin A."/>
            <person name="Shao Y."/>
            <person name="Miller L."/>
            <person name="Grotbeck E.J."/>
            <person name="Davis N.W."/>
            <person name="Lim A."/>
            <person name="Dimalanta E.T."/>
            <person name="Potamousis K."/>
            <person name="Apodaca J."/>
            <person name="Anantharaman T.S."/>
            <person name="Lin J."/>
            <person name="Yen G."/>
            <person name="Schwartz D.C."/>
            <person name="Welch R.A."/>
            <person name="Blattner F.R."/>
        </authorList>
    </citation>
    <scope>NUCLEOTIDE SEQUENCE [LARGE SCALE GENOMIC DNA]</scope>
    <source>
        <strain>O157:H7 / EDL933 / ATCC 700927 / EHEC</strain>
    </source>
</reference>
<reference key="2">
    <citation type="journal article" date="2001" name="DNA Res.">
        <title>Complete genome sequence of enterohemorrhagic Escherichia coli O157:H7 and genomic comparison with a laboratory strain K-12.</title>
        <authorList>
            <person name="Hayashi T."/>
            <person name="Makino K."/>
            <person name="Ohnishi M."/>
            <person name="Kurokawa K."/>
            <person name="Ishii K."/>
            <person name="Yokoyama K."/>
            <person name="Han C.-G."/>
            <person name="Ohtsubo E."/>
            <person name="Nakayama K."/>
            <person name="Murata T."/>
            <person name="Tanaka M."/>
            <person name="Tobe T."/>
            <person name="Iida T."/>
            <person name="Takami H."/>
            <person name="Honda T."/>
            <person name="Sasakawa C."/>
            <person name="Ogasawara N."/>
            <person name="Yasunaga T."/>
            <person name="Kuhara S."/>
            <person name="Shiba T."/>
            <person name="Hattori M."/>
            <person name="Shinagawa H."/>
        </authorList>
    </citation>
    <scope>NUCLEOTIDE SEQUENCE [LARGE SCALE GENOMIC DNA]</scope>
    <source>
        <strain>O157:H7 / Sakai / RIMD 0509952 / EHEC</strain>
    </source>
</reference>
<accession>P64498</accession>
<accession>P76247</accession>
<sequence>MGKATYTVTVTNNSNGVSVDYETETPMTLLVPEVAAEVIKDLVNTVRSYDTENEHDVCGW</sequence>
<comment type="subunit">
    <text evidence="1">Homodimer.</text>
</comment>